<accession>B9KLB6</accession>
<protein>
    <recommendedName>
        <fullName evidence="1">Large ribosomal subunit protein bL17</fullName>
    </recommendedName>
    <alternativeName>
        <fullName evidence="2">50S ribosomal protein L17</fullName>
    </alternativeName>
</protein>
<dbReference type="EMBL" id="CP001150">
    <property type="protein sequence ID" value="ACL99898.1"/>
    <property type="molecule type" value="Genomic_DNA"/>
</dbReference>
<dbReference type="RefSeq" id="WP_002722538.1">
    <property type="nucleotide sequence ID" value="NC_011963.1"/>
</dbReference>
<dbReference type="SMR" id="B9KLB6"/>
<dbReference type="GeneID" id="67445525"/>
<dbReference type="KEGG" id="rsk:RSKD131_0039"/>
<dbReference type="HOGENOM" id="CLU_074407_2_0_5"/>
<dbReference type="GO" id="GO:0022625">
    <property type="term" value="C:cytosolic large ribosomal subunit"/>
    <property type="evidence" value="ECO:0007669"/>
    <property type="project" value="TreeGrafter"/>
</dbReference>
<dbReference type="GO" id="GO:0003735">
    <property type="term" value="F:structural constituent of ribosome"/>
    <property type="evidence" value="ECO:0007669"/>
    <property type="project" value="InterPro"/>
</dbReference>
<dbReference type="GO" id="GO:0006412">
    <property type="term" value="P:translation"/>
    <property type="evidence" value="ECO:0007669"/>
    <property type="project" value="UniProtKB-UniRule"/>
</dbReference>
<dbReference type="FunFam" id="3.90.1030.10:FF:000001">
    <property type="entry name" value="50S ribosomal protein L17"/>
    <property type="match status" value="1"/>
</dbReference>
<dbReference type="Gene3D" id="3.90.1030.10">
    <property type="entry name" value="Ribosomal protein L17"/>
    <property type="match status" value="1"/>
</dbReference>
<dbReference type="HAMAP" id="MF_01368">
    <property type="entry name" value="Ribosomal_bL17"/>
    <property type="match status" value="1"/>
</dbReference>
<dbReference type="InterPro" id="IPR000456">
    <property type="entry name" value="Ribosomal_bL17"/>
</dbReference>
<dbReference type="InterPro" id="IPR047859">
    <property type="entry name" value="Ribosomal_bL17_CS"/>
</dbReference>
<dbReference type="InterPro" id="IPR036373">
    <property type="entry name" value="Ribosomal_bL17_sf"/>
</dbReference>
<dbReference type="NCBIfam" id="TIGR00059">
    <property type="entry name" value="L17"/>
    <property type="match status" value="1"/>
</dbReference>
<dbReference type="PANTHER" id="PTHR14413:SF16">
    <property type="entry name" value="LARGE RIBOSOMAL SUBUNIT PROTEIN BL17M"/>
    <property type="match status" value="1"/>
</dbReference>
<dbReference type="PANTHER" id="PTHR14413">
    <property type="entry name" value="RIBOSOMAL PROTEIN L17"/>
    <property type="match status" value="1"/>
</dbReference>
<dbReference type="Pfam" id="PF01196">
    <property type="entry name" value="Ribosomal_L17"/>
    <property type="match status" value="1"/>
</dbReference>
<dbReference type="SUPFAM" id="SSF64263">
    <property type="entry name" value="Prokaryotic ribosomal protein L17"/>
    <property type="match status" value="1"/>
</dbReference>
<dbReference type="PROSITE" id="PS01167">
    <property type="entry name" value="RIBOSOMAL_L17"/>
    <property type="match status" value="1"/>
</dbReference>
<proteinExistence type="inferred from homology"/>
<organism>
    <name type="scientific">Cereibacter sphaeroides (strain KD131 / KCTC 12085)</name>
    <name type="common">Rhodobacter sphaeroides</name>
    <dbReference type="NCBI Taxonomy" id="557760"/>
    <lineage>
        <taxon>Bacteria</taxon>
        <taxon>Pseudomonadati</taxon>
        <taxon>Pseudomonadota</taxon>
        <taxon>Alphaproteobacteria</taxon>
        <taxon>Rhodobacterales</taxon>
        <taxon>Paracoccaceae</taxon>
        <taxon>Cereibacter</taxon>
    </lineage>
</organism>
<keyword id="KW-0687">Ribonucleoprotein</keyword>
<keyword id="KW-0689">Ribosomal protein</keyword>
<reference key="1">
    <citation type="journal article" date="2009" name="J. Bacteriol.">
        <title>Complete genome sequence of Rhodobacter sphaeroides KD131.</title>
        <authorList>
            <person name="Lim S.-K."/>
            <person name="Kim S.J."/>
            <person name="Cha S.H."/>
            <person name="Oh Y.-K."/>
            <person name="Rhee H.-J."/>
            <person name="Kim M.-S."/>
            <person name="Lee J.K."/>
        </authorList>
    </citation>
    <scope>NUCLEOTIDE SEQUENCE [LARGE SCALE GENOMIC DNA]</scope>
    <source>
        <strain>KD131 / KCTC 12085</strain>
    </source>
</reference>
<feature type="chain" id="PRO_1000184040" description="Large ribosomal subunit protein bL17">
    <location>
        <begin position="1"/>
        <end position="139"/>
    </location>
</feature>
<name>RL17_CERSK</name>
<evidence type="ECO:0000255" key="1">
    <source>
        <dbReference type="HAMAP-Rule" id="MF_01368"/>
    </source>
</evidence>
<evidence type="ECO:0000305" key="2"/>
<sequence length="139" mass="15795">MRHARGYRRLNRTHEHRKALFANMAGSLIEHEQIKTTLPKAKELRPIIEKLITLAKRGDLHARRQAAAQLKEDRHVARLFEILGPRYAERAGGYVRVLKAGFRYGDMAPMAIIEFVDRDPNAKGAADKARTAAEEALEE</sequence>
<comment type="subunit">
    <text evidence="1">Part of the 50S ribosomal subunit. Contacts protein L32.</text>
</comment>
<comment type="similarity">
    <text evidence="1">Belongs to the bacterial ribosomal protein bL17 family.</text>
</comment>
<gene>
    <name evidence="1" type="primary">rplQ</name>
    <name type="ordered locus">RSKD131_0039</name>
</gene>